<comment type="function">
    <text evidence="1">Specifically methylates the cytosine at position 1407 (m5C1407) of 16S rRNA.</text>
</comment>
<comment type="catalytic activity">
    <reaction evidence="1">
        <text>cytidine(1407) in 16S rRNA + S-adenosyl-L-methionine = 5-methylcytidine(1407) in 16S rRNA + S-adenosyl-L-homocysteine + H(+)</text>
        <dbReference type="Rhea" id="RHEA:42756"/>
        <dbReference type="Rhea" id="RHEA-COMP:10223"/>
        <dbReference type="Rhea" id="RHEA-COMP:10224"/>
        <dbReference type="ChEBI" id="CHEBI:15378"/>
        <dbReference type="ChEBI" id="CHEBI:57856"/>
        <dbReference type="ChEBI" id="CHEBI:59789"/>
        <dbReference type="ChEBI" id="CHEBI:74483"/>
        <dbReference type="ChEBI" id="CHEBI:82748"/>
        <dbReference type="EC" id="2.1.1.178"/>
    </reaction>
</comment>
<comment type="subcellular location">
    <subcellularLocation>
        <location evidence="1">Cytoplasm</location>
    </subcellularLocation>
</comment>
<comment type="similarity">
    <text evidence="1">Belongs to the class I-like SAM-binding methyltransferase superfamily. RsmB/NOP family.</text>
</comment>
<comment type="sequence caution" evidence="2">
    <conflict type="erroneous initiation">
        <sequence resource="EMBL-CDS" id="ABE07512"/>
    </conflict>
</comment>
<proteinExistence type="inferred from homology"/>
<reference key="1">
    <citation type="journal article" date="2006" name="Proc. Natl. Acad. Sci. U.S.A.">
        <title>Identification of genes subject to positive selection in uropathogenic strains of Escherichia coli: a comparative genomics approach.</title>
        <authorList>
            <person name="Chen S.L."/>
            <person name="Hung C.-S."/>
            <person name="Xu J."/>
            <person name="Reigstad C.S."/>
            <person name="Magrini V."/>
            <person name="Sabo A."/>
            <person name="Blasiar D."/>
            <person name="Bieri T."/>
            <person name="Meyer R.R."/>
            <person name="Ozersky P."/>
            <person name="Armstrong J.R."/>
            <person name="Fulton R.S."/>
            <person name="Latreille J.P."/>
            <person name="Spieth J."/>
            <person name="Hooton T.M."/>
            <person name="Mardis E.R."/>
            <person name="Hultgren S.J."/>
            <person name="Gordon J.I."/>
        </authorList>
    </citation>
    <scope>NUCLEOTIDE SEQUENCE [LARGE SCALE GENOMIC DNA]</scope>
    <source>
        <strain>UTI89 / UPEC</strain>
    </source>
</reference>
<organism>
    <name type="scientific">Escherichia coli (strain UTI89 / UPEC)</name>
    <dbReference type="NCBI Taxonomy" id="364106"/>
    <lineage>
        <taxon>Bacteria</taxon>
        <taxon>Pseudomonadati</taxon>
        <taxon>Pseudomonadota</taxon>
        <taxon>Gammaproteobacteria</taxon>
        <taxon>Enterobacterales</taxon>
        <taxon>Enterobacteriaceae</taxon>
        <taxon>Escherichia</taxon>
    </lineage>
</organism>
<dbReference type="EC" id="2.1.1.178" evidence="1"/>
<dbReference type="EMBL" id="CP000243">
    <property type="protein sequence ID" value="ABE07512.1"/>
    <property type="status" value="ALT_INIT"/>
    <property type="molecule type" value="Genomic_DNA"/>
</dbReference>
<dbReference type="RefSeq" id="WP_001350670.1">
    <property type="nucleotide sequence ID" value="NZ_CP064825.1"/>
</dbReference>
<dbReference type="SMR" id="Q1RAV2"/>
<dbReference type="KEGG" id="eci:UTI89_C2036"/>
<dbReference type="HOGENOM" id="CLU_005316_6_2_6"/>
<dbReference type="Proteomes" id="UP000001952">
    <property type="component" value="Chromosome"/>
</dbReference>
<dbReference type="GO" id="GO:0005737">
    <property type="term" value="C:cytoplasm"/>
    <property type="evidence" value="ECO:0007669"/>
    <property type="project" value="UniProtKB-SubCell"/>
</dbReference>
<dbReference type="GO" id="GO:0003723">
    <property type="term" value="F:RNA binding"/>
    <property type="evidence" value="ECO:0007669"/>
    <property type="project" value="UniProtKB-KW"/>
</dbReference>
<dbReference type="GO" id="GO:0009383">
    <property type="term" value="F:rRNA (cytosine-C5-)-methyltransferase activity"/>
    <property type="evidence" value="ECO:0007669"/>
    <property type="project" value="TreeGrafter"/>
</dbReference>
<dbReference type="GO" id="GO:0070475">
    <property type="term" value="P:rRNA base methylation"/>
    <property type="evidence" value="ECO:0007669"/>
    <property type="project" value="TreeGrafter"/>
</dbReference>
<dbReference type="FunFam" id="3.10.450.720:FF:000001">
    <property type="entry name" value="Ribosomal RNA small subunit methyltransferase F"/>
    <property type="match status" value="1"/>
</dbReference>
<dbReference type="FunFam" id="3.40.50.150:FF:000079">
    <property type="entry name" value="Ribosomal RNA small subunit methyltransferase F"/>
    <property type="match status" value="1"/>
</dbReference>
<dbReference type="Gene3D" id="3.10.450.720">
    <property type="match status" value="1"/>
</dbReference>
<dbReference type="Gene3D" id="3.40.50.150">
    <property type="entry name" value="Vaccinia Virus protein VP39"/>
    <property type="match status" value="1"/>
</dbReference>
<dbReference type="HAMAP" id="MF_01579">
    <property type="entry name" value="16SrRNA_methyltr_F"/>
    <property type="match status" value="1"/>
</dbReference>
<dbReference type="InterPro" id="IPR031341">
    <property type="entry name" value="Methyltr_RsmF_N"/>
</dbReference>
<dbReference type="InterPro" id="IPR049560">
    <property type="entry name" value="MeTrfase_RsmB-F_NOP2_cat"/>
</dbReference>
<dbReference type="InterPro" id="IPR001678">
    <property type="entry name" value="MeTrfase_RsmB-F_NOP2_dom"/>
</dbReference>
<dbReference type="InterPro" id="IPR027391">
    <property type="entry name" value="Nol1_Nop2_Fmu_2"/>
</dbReference>
<dbReference type="InterPro" id="IPR011023">
    <property type="entry name" value="Nop2p"/>
</dbReference>
<dbReference type="InterPro" id="IPR023267">
    <property type="entry name" value="RCMT"/>
</dbReference>
<dbReference type="InterPro" id="IPR023545">
    <property type="entry name" value="rRNA_ssu_MeTfrase_F"/>
</dbReference>
<dbReference type="InterPro" id="IPR018314">
    <property type="entry name" value="RsmB/NOL1/NOP2-like_CS"/>
</dbReference>
<dbReference type="InterPro" id="IPR029063">
    <property type="entry name" value="SAM-dependent_MTases_sf"/>
</dbReference>
<dbReference type="InterPro" id="IPR048457">
    <property type="entry name" value="YebU_pre-PUA_dom"/>
</dbReference>
<dbReference type="NCBIfam" id="TIGR00446">
    <property type="entry name" value="nop2p"/>
    <property type="match status" value="1"/>
</dbReference>
<dbReference type="NCBIfam" id="NF008898">
    <property type="entry name" value="PRK11933.1"/>
    <property type="match status" value="1"/>
</dbReference>
<dbReference type="PANTHER" id="PTHR22807:SF30">
    <property type="entry name" value="28S RRNA (CYTOSINE(4447)-C(5))-METHYLTRANSFERASE-RELATED"/>
    <property type="match status" value="1"/>
</dbReference>
<dbReference type="PANTHER" id="PTHR22807">
    <property type="entry name" value="NOP2 YEAST -RELATED NOL1/NOP2/FMU SUN DOMAIN-CONTAINING"/>
    <property type="match status" value="1"/>
</dbReference>
<dbReference type="Pfam" id="PF01189">
    <property type="entry name" value="Methyltr_RsmB-F"/>
    <property type="match status" value="1"/>
</dbReference>
<dbReference type="Pfam" id="PF17125">
    <property type="entry name" value="Methyltr_RsmF_N"/>
    <property type="match status" value="1"/>
</dbReference>
<dbReference type="Pfam" id="PF13636">
    <property type="entry name" value="Methyltranf_PUA"/>
    <property type="match status" value="1"/>
</dbReference>
<dbReference type="Pfam" id="PF21150">
    <property type="entry name" value="YebU_pre-PUA_dom"/>
    <property type="match status" value="1"/>
</dbReference>
<dbReference type="PRINTS" id="PR02008">
    <property type="entry name" value="RCMTFAMILY"/>
</dbReference>
<dbReference type="SUPFAM" id="SSF53335">
    <property type="entry name" value="S-adenosyl-L-methionine-dependent methyltransferases"/>
    <property type="match status" value="1"/>
</dbReference>
<dbReference type="PROSITE" id="PS01153">
    <property type="entry name" value="NOL1_NOP2_SUN"/>
    <property type="match status" value="1"/>
</dbReference>
<dbReference type="PROSITE" id="PS51686">
    <property type="entry name" value="SAM_MT_RSMB_NOP"/>
    <property type="match status" value="1"/>
</dbReference>
<accession>Q1RAV2</accession>
<feature type="chain" id="PRO_0000284997" description="Ribosomal RNA small subunit methyltransferase F">
    <location>
        <begin position="1"/>
        <end position="479"/>
    </location>
</feature>
<feature type="active site" description="Nucleophile" evidence="1">
    <location>
        <position position="247"/>
    </location>
</feature>
<feature type="binding site" evidence="1">
    <location>
        <begin position="125"/>
        <end position="131"/>
    </location>
    <ligand>
        <name>S-adenosyl-L-methionine</name>
        <dbReference type="ChEBI" id="CHEBI:59789"/>
    </ligand>
</feature>
<feature type="binding site" evidence="1">
    <location>
        <position position="149"/>
    </location>
    <ligand>
        <name>S-adenosyl-L-methionine</name>
        <dbReference type="ChEBI" id="CHEBI:59789"/>
    </ligand>
</feature>
<feature type="binding site" evidence="1">
    <location>
        <position position="176"/>
    </location>
    <ligand>
        <name>S-adenosyl-L-methionine</name>
        <dbReference type="ChEBI" id="CHEBI:59789"/>
    </ligand>
</feature>
<feature type="binding site" evidence="1">
    <location>
        <position position="194"/>
    </location>
    <ligand>
        <name>S-adenosyl-L-methionine</name>
        <dbReference type="ChEBI" id="CHEBI:59789"/>
    </ligand>
</feature>
<name>RSMF_ECOUT</name>
<gene>
    <name evidence="1" type="primary">rsmF</name>
    <name type="ordered locus">UTI89_C2036</name>
</gene>
<evidence type="ECO:0000255" key="1">
    <source>
        <dbReference type="HAMAP-Rule" id="MF_01579"/>
    </source>
</evidence>
<evidence type="ECO:0000305" key="2"/>
<keyword id="KW-0963">Cytoplasm</keyword>
<keyword id="KW-0489">Methyltransferase</keyword>
<keyword id="KW-0694">RNA-binding</keyword>
<keyword id="KW-0698">rRNA processing</keyword>
<keyword id="KW-0949">S-adenosyl-L-methionine</keyword>
<keyword id="KW-0808">Transferase</keyword>
<protein>
    <recommendedName>
        <fullName evidence="1">Ribosomal RNA small subunit methyltransferase F</fullName>
        <ecNumber evidence="1">2.1.1.178</ecNumber>
    </recommendedName>
    <alternativeName>
        <fullName evidence="1">16S rRNA m5C1407 methyltransferase</fullName>
    </alternativeName>
    <alternativeName>
        <fullName evidence="1">rRNA (cytosine-C(5)-)-methyltransferase RsmF</fullName>
    </alternativeName>
</protein>
<sequence>MAQHTVYFPDAFLTQMREAMPSTLSFDDFLAACQRPLRRSIRVNTLKTSVADFLQLTAPYGWTLTPIPWCEEGFWIERDSEDALPLGSTAEHLSGLFYIQEASSMLPVAALFADGNAPQRVMDVAAAPGSKTTQIAARMNNKGAILANEFSASRVKVLHANISRCGISNVALTHFDGRVFGAAVPEMFDAILLDAPCSGEGVVRKDPDALKNWSPESNQEIAATQRELIDSAFHALRLGGTLVYSTCTLNREENEAVCLWLKETYHDAVEFLPLGDLFPGANKALTEDGFLHVFPQIYDCEGFFVARLRKTQAIPVLPAPKYKVGNFPFSPVKDREAGQIRQAAASVGLNWDENLRLWQRDKELWLFPVGIEALIGKVRFSRLGIKLAETHNKGYRWQHEAVIALASPDNVNAFELTPQEAEEWYRGRDVYPQAAPVADDVLVTFQHQPIGLAKRIGSRLKNSYPRELVRDGKLFTGNA</sequence>